<organism>
    <name type="scientific">Yersinia enterocolitica serotype O:8 / biotype 1B (strain NCTC 13174 / 8081)</name>
    <dbReference type="NCBI Taxonomy" id="393305"/>
    <lineage>
        <taxon>Bacteria</taxon>
        <taxon>Pseudomonadati</taxon>
        <taxon>Pseudomonadota</taxon>
        <taxon>Gammaproteobacteria</taxon>
        <taxon>Enterobacterales</taxon>
        <taxon>Yersiniaceae</taxon>
        <taxon>Yersinia</taxon>
    </lineage>
</organism>
<comment type="function">
    <text evidence="1">Catalyzes the specific phosphorylation of the 3-hydroxyl group of shikimic acid using ATP as a cosubstrate.</text>
</comment>
<comment type="catalytic activity">
    <reaction evidence="1">
        <text>shikimate + ATP = 3-phosphoshikimate + ADP + H(+)</text>
        <dbReference type="Rhea" id="RHEA:13121"/>
        <dbReference type="ChEBI" id="CHEBI:15378"/>
        <dbReference type="ChEBI" id="CHEBI:30616"/>
        <dbReference type="ChEBI" id="CHEBI:36208"/>
        <dbReference type="ChEBI" id="CHEBI:145989"/>
        <dbReference type="ChEBI" id="CHEBI:456216"/>
        <dbReference type="EC" id="2.7.1.71"/>
    </reaction>
</comment>
<comment type="cofactor">
    <cofactor evidence="1">
        <name>Mg(2+)</name>
        <dbReference type="ChEBI" id="CHEBI:18420"/>
    </cofactor>
    <text evidence="1">Binds 1 Mg(2+) ion per subunit.</text>
</comment>
<comment type="pathway">
    <text evidence="1">Metabolic intermediate biosynthesis; chorismate biosynthesis; chorismate from D-erythrose 4-phosphate and phosphoenolpyruvate: step 5/7.</text>
</comment>
<comment type="subunit">
    <text evidence="1">Monomer.</text>
</comment>
<comment type="subcellular location">
    <subcellularLocation>
        <location evidence="1">Cytoplasm</location>
    </subcellularLocation>
</comment>
<comment type="similarity">
    <text evidence="1">Belongs to the shikimate kinase family.</text>
</comment>
<sequence>MAEKRNIFLVGPMGAGKSTIGRQLAQQLNMEFFDSDQEIERRTGADVGWVFDVEGEEGFRDREEKVINELTEKQGIVLATGGGSVKSRETRNRLSARGVVVYLETTIEKQLARTQRDKKRPLLQVDSPPREVLEALAKERNPLYEEIADVTIRTDDQSAKVVANQIINMLESN</sequence>
<proteinExistence type="inferred from homology"/>
<dbReference type="EC" id="2.7.1.71" evidence="1"/>
<dbReference type="EMBL" id="AM286415">
    <property type="protein sequence ID" value="CAL13994.1"/>
    <property type="molecule type" value="Genomic_DNA"/>
</dbReference>
<dbReference type="RefSeq" id="WP_004391482.1">
    <property type="nucleotide sequence ID" value="NC_008800.1"/>
</dbReference>
<dbReference type="RefSeq" id="YP_001008120.1">
    <property type="nucleotide sequence ID" value="NC_008800.1"/>
</dbReference>
<dbReference type="SMR" id="A1JSD4"/>
<dbReference type="GeneID" id="98190661"/>
<dbReference type="KEGG" id="yen:YE3975"/>
<dbReference type="PATRIC" id="fig|393305.7.peg.4230"/>
<dbReference type="eggNOG" id="COG0703">
    <property type="taxonomic scope" value="Bacteria"/>
</dbReference>
<dbReference type="HOGENOM" id="CLU_057607_2_2_6"/>
<dbReference type="OrthoDB" id="9800332at2"/>
<dbReference type="UniPathway" id="UPA00053">
    <property type="reaction ID" value="UER00088"/>
</dbReference>
<dbReference type="PRO" id="PR:A1JSD4"/>
<dbReference type="Proteomes" id="UP000000642">
    <property type="component" value="Chromosome"/>
</dbReference>
<dbReference type="GO" id="GO:0005829">
    <property type="term" value="C:cytosol"/>
    <property type="evidence" value="ECO:0007669"/>
    <property type="project" value="TreeGrafter"/>
</dbReference>
<dbReference type="GO" id="GO:0005524">
    <property type="term" value="F:ATP binding"/>
    <property type="evidence" value="ECO:0007669"/>
    <property type="project" value="UniProtKB-UniRule"/>
</dbReference>
<dbReference type="GO" id="GO:0000287">
    <property type="term" value="F:magnesium ion binding"/>
    <property type="evidence" value="ECO:0007669"/>
    <property type="project" value="UniProtKB-UniRule"/>
</dbReference>
<dbReference type="GO" id="GO:0004765">
    <property type="term" value="F:shikimate kinase activity"/>
    <property type="evidence" value="ECO:0007669"/>
    <property type="project" value="UniProtKB-UniRule"/>
</dbReference>
<dbReference type="GO" id="GO:0008652">
    <property type="term" value="P:amino acid biosynthetic process"/>
    <property type="evidence" value="ECO:0007669"/>
    <property type="project" value="UniProtKB-KW"/>
</dbReference>
<dbReference type="GO" id="GO:0009073">
    <property type="term" value="P:aromatic amino acid family biosynthetic process"/>
    <property type="evidence" value="ECO:0007669"/>
    <property type="project" value="UniProtKB-KW"/>
</dbReference>
<dbReference type="GO" id="GO:0009423">
    <property type="term" value="P:chorismate biosynthetic process"/>
    <property type="evidence" value="ECO:0007669"/>
    <property type="project" value="UniProtKB-UniRule"/>
</dbReference>
<dbReference type="CDD" id="cd00464">
    <property type="entry name" value="SK"/>
    <property type="match status" value="1"/>
</dbReference>
<dbReference type="FunFam" id="3.40.50.300:FF:000099">
    <property type="entry name" value="Shikimate kinase 1"/>
    <property type="match status" value="1"/>
</dbReference>
<dbReference type="Gene3D" id="3.40.50.300">
    <property type="entry name" value="P-loop containing nucleotide triphosphate hydrolases"/>
    <property type="match status" value="1"/>
</dbReference>
<dbReference type="HAMAP" id="MF_00109">
    <property type="entry name" value="Shikimate_kinase"/>
    <property type="match status" value="1"/>
</dbReference>
<dbReference type="InterPro" id="IPR027417">
    <property type="entry name" value="P-loop_NTPase"/>
</dbReference>
<dbReference type="InterPro" id="IPR031322">
    <property type="entry name" value="Shikimate/glucono_kinase"/>
</dbReference>
<dbReference type="InterPro" id="IPR000623">
    <property type="entry name" value="Shikimate_kinase/TSH1"/>
</dbReference>
<dbReference type="InterPro" id="IPR023000">
    <property type="entry name" value="Shikimate_kinase_CS"/>
</dbReference>
<dbReference type="NCBIfam" id="NF003456">
    <property type="entry name" value="PRK05057.1"/>
    <property type="match status" value="1"/>
</dbReference>
<dbReference type="PANTHER" id="PTHR21087">
    <property type="entry name" value="SHIKIMATE KINASE"/>
    <property type="match status" value="1"/>
</dbReference>
<dbReference type="PANTHER" id="PTHR21087:SF16">
    <property type="entry name" value="SHIKIMATE KINASE 1, CHLOROPLASTIC"/>
    <property type="match status" value="1"/>
</dbReference>
<dbReference type="Pfam" id="PF01202">
    <property type="entry name" value="SKI"/>
    <property type="match status" value="1"/>
</dbReference>
<dbReference type="PRINTS" id="PR01100">
    <property type="entry name" value="SHIKIMTKNASE"/>
</dbReference>
<dbReference type="SUPFAM" id="SSF52540">
    <property type="entry name" value="P-loop containing nucleoside triphosphate hydrolases"/>
    <property type="match status" value="1"/>
</dbReference>
<dbReference type="PROSITE" id="PS01128">
    <property type="entry name" value="SHIKIMATE_KINASE"/>
    <property type="match status" value="1"/>
</dbReference>
<keyword id="KW-0028">Amino-acid biosynthesis</keyword>
<keyword id="KW-0057">Aromatic amino acid biosynthesis</keyword>
<keyword id="KW-0067">ATP-binding</keyword>
<keyword id="KW-0963">Cytoplasm</keyword>
<keyword id="KW-0418">Kinase</keyword>
<keyword id="KW-0460">Magnesium</keyword>
<keyword id="KW-0479">Metal-binding</keyword>
<keyword id="KW-0547">Nucleotide-binding</keyword>
<keyword id="KW-0808">Transferase</keyword>
<reference key="1">
    <citation type="journal article" date="2006" name="PLoS Genet.">
        <title>The complete genome sequence and comparative genome analysis of the high pathogenicity Yersinia enterocolitica strain 8081.</title>
        <authorList>
            <person name="Thomson N.R."/>
            <person name="Howard S."/>
            <person name="Wren B.W."/>
            <person name="Holden M.T.G."/>
            <person name="Crossman L."/>
            <person name="Challis G.L."/>
            <person name="Churcher C."/>
            <person name="Mungall K."/>
            <person name="Brooks K."/>
            <person name="Chillingworth T."/>
            <person name="Feltwell T."/>
            <person name="Abdellah Z."/>
            <person name="Hauser H."/>
            <person name="Jagels K."/>
            <person name="Maddison M."/>
            <person name="Moule S."/>
            <person name="Sanders M."/>
            <person name="Whitehead S."/>
            <person name="Quail M.A."/>
            <person name="Dougan G."/>
            <person name="Parkhill J."/>
            <person name="Prentice M.B."/>
        </authorList>
    </citation>
    <scope>NUCLEOTIDE SEQUENCE [LARGE SCALE GENOMIC DNA]</scope>
    <source>
        <strain>NCTC 13174 / 8081</strain>
    </source>
</reference>
<accession>A1JSD4</accession>
<protein>
    <recommendedName>
        <fullName evidence="1">Shikimate kinase 1</fullName>
        <shortName evidence="1">SK 1</shortName>
        <ecNumber evidence="1">2.7.1.71</ecNumber>
    </recommendedName>
</protein>
<evidence type="ECO:0000255" key="1">
    <source>
        <dbReference type="HAMAP-Rule" id="MF_00109"/>
    </source>
</evidence>
<gene>
    <name evidence="1" type="primary">aroK</name>
    <name type="ordered locus">YE3975</name>
</gene>
<feature type="chain" id="PRO_1000023006" description="Shikimate kinase 1">
    <location>
        <begin position="1"/>
        <end position="173"/>
    </location>
</feature>
<feature type="binding site" evidence="1">
    <location>
        <begin position="14"/>
        <end position="19"/>
    </location>
    <ligand>
        <name>ATP</name>
        <dbReference type="ChEBI" id="CHEBI:30616"/>
    </ligand>
</feature>
<feature type="binding site" evidence="1">
    <location>
        <position position="18"/>
    </location>
    <ligand>
        <name>Mg(2+)</name>
        <dbReference type="ChEBI" id="CHEBI:18420"/>
    </ligand>
</feature>
<feature type="binding site" evidence="1">
    <location>
        <position position="36"/>
    </location>
    <ligand>
        <name>substrate</name>
    </ligand>
</feature>
<feature type="binding site" evidence="1">
    <location>
        <position position="60"/>
    </location>
    <ligand>
        <name>substrate</name>
    </ligand>
</feature>
<feature type="binding site" evidence="1">
    <location>
        <position position="82"/>
    </location>
    <ligand>
        <name>substrate</name>
    </ligand>
</feature>
<feature type="binding site" evidence="1">
    <location>
        <position position="120"/>
    </location>
    <ligand>
        <name>ATP</name>
        <dbReference type="ChEBI" id="CHEBI:30616"/>
    </ligand>
</feature>
<feature type="binding site" evidence="1">
    <location>
        <position position="140"/>
    </location>
    <ligand>
        <name>substrate</name>
    </ligand>
</feature>
<feature type="binding site" evidence="1">
    <location>
        <position position="157"/>
    </location>
    <ligand>
        <name>ATP</name>
        <dbReference type="ChEBI" id="CHEBI:30616"/>
    </ligand>
</feature>
<name>AROK_YERE8</name>